<keyword id="KW-0067">ATP-binding</keyword>
<keyword id="KW-0131">Cell cycle</keyword>
<keyword id="KW-0132">Cell division</keyword>
<keyword id="KW-0133">Cell shape</keyword>
<keyword id="KW-0961">Cell wall biogenesis/degradation</keyword>
<keyword id="KW-0963">Cytoplasm</keyword>
<keyword id="KW-0436">Ligase</keyword>
<keyword id="KW-0547">Nucleotide-binding</keyword>
<keyword id="KW-0573">Peptidoglycan synthesis</keyword>
<keyword id="KW-1185">Reference proteome</keyword>
<comment type="function">
    <text evidence="1">Cell wall formation.</text>
</comment>
<comment type="catalytic activity">
    <reaction evidence="1">
        <text>UDP-N-acetyl-alpha-D-muramate + L-alanine + ATP = UDP-N-acetyl-alpha-D-muramoyl-L-alanine + ADP + phosphate + H(+)</text>
        <dbReference type="Rhea" id="RHEA:23372"/>
        <dbReference type="ChEBI" id="CHEBI:15378"/>
        <dbReference type="ChEBI" id="CHEBI:30616"/>
        <dbReference type="ChEBI" id="CHEBI:43474"/>
        <dbReference type="ChEBI" id="CHEBI:57972"/>
        <dbReference type="ChEBI" id="CHEBI:70757"/>
        <dbReference type="ChEBI" id="CHEBI:83898"/>
        <dbReference type="ChEBI" id="CHEBI:456216"/>
        <dbReference type="EC" id="6.3.2.8"/>
    </reaction>
</comment>
<comment type="pathway">
    <text evidence="1">Cell wall biogenesis; peptidoglycan biosynthesis.</text>
</comment>
<comment type="subcellular location">
    <subcellularLocation>
        <location evidence="1">Cytoplasm</location>
    </subcellularLocation>
</comment>
<comment type="similarity">
    <text evidence="1">Belongs to the MurCDEF family.</text>
</comment>
<proteinExistence type="inferred from homology"/>
<dbReference type="EC" id="6.3.2.8" evidence="1"/>
<dbReference type="EMBL" id="CP000513">
    <property type="protein sequence ID" value="ABQ13874.1"/>
    <property type="molecule type" value="Genomic_DNA"/>
</dbReference>
<dbReference type="RefSeq" id="WP_012031293.1">
    <property type="nucleotide sequence ID" value="NC_009446.1"/>
</dbReference>
<dbReference type="SMR" id="A5EY22"/>
<dbReference type="STRING" id="246195.DNO_0980"/>
<dbReference type="KEGG" id="dno:DNO_0980"/>
<dbReference type="eggNOG" id="COG0773">
    <property type="taxonomic scope" value="Bacteria"/>
</dbReference>
<dbReference type="HOGENOM" id="CLU_028104_2_2_6"/>
<dbReference type="OrthoDB" id="9804126at2"/>
<dbReference type="UniPathway" id="UPA00219"/>
<dbReference type="Proteomes" id="UP000000248">
    <property type="component" value="Chromosome"/>
</dbReference>
<dbReference type="GO" id="GO:0005737">
    <property type="term" value="C:cytoplasm"/>
    <property type="evidence" value="ECO:0007669"/>
    <property type="project" value="UniProtKB-SubCell"/>
</dbReference>
<dbReference type="GO" id="GO:0005524">
    <property type="term" value="F:ATP binding"/>
    <property type="evidence" value="ECO:0007669"/>
    <property type="project" value="UniProtKB-UniRule"/>
</dbReference>
<dbReference type="GO" id="GO:0008763">
    <property type="term" value="F:UDP-N-acetylmuramate-L-alanine ligase activity"/>
    <property type="evidence" value="ECO:0007669"/>
    <property type="project" value="UniProtKB-UniRule"/>
</dbReference>
<dbReference type="GO" id="GO:0051301">
    <property type="term" value="P:cell division"/>
    <property type="evidence" value="ECO:0007669"/>
    <property type="project" value="UniProtKB-KW"/>
</dbReference>
<dbReference type="GO" id="GO:0071555">
    <property type="term" value="P:cell wall organization"/>
    <property type="evidence" value="ECO:0007669"/>
    <property type="project" value="UniProtKB-KW"/>
</dbReference>
<dbReference type="GO" id="GO:0009252">
    <property type="term" value="P:peptidoglycan biosynthetic process"/>
    <property type="evidence" value="ECO:0007669"/>
    <property type="project" value="UniProtKB-UniRule"/>
</dbReference>
<dbReference type="GO" id="GO:0008360">
    <property type="term" value="P:regulation of cell shape"/>
    <property type="evidence" value="ECO:0007669"/>
    <property type="project" value="UniProtKB-KW"/>
</dbReference>
<dbReference type="FunFam" id="3.40.1190.10:FF:000001">
    <property type="entry name" value="UDP-N-acetylmuramate--L-alanine ligase"/>
    <property type="match status" value="1"/>
</dbReference>
<dbReference type="Gene3D" id="3.90.190.20">
    <property type="entry name" value="Mur ligase, C-terminal domain"/>
    <property type="match status" value="1"/>
</dbReference>
<dbReference type="Gene3D" id="3.40.1190.10">
    <property type="entry name" value="Mur-like, catalytic domain"/>
    <property type="match status" value="1"/>
</dbReference>
<dbReference type="Gene3D" id="3.40.50.720">
    <property type="entry name" value="NAD(P)-binding Rossmann-like Domain"/>
    <property type="match status" value="1"/>
</dbReference>
<dbReference type="HAMAP" id="MF_00046">
    <property type="entry name" value="MurC"/>
    <property type="match status" value="1"/>
</dbReference>
<dbReference type="InterPro" id="IPR036565">
    <property type="entry name" value="Mur-like_cat_sf"/>
</dbReference>
<dbReference type="InterPro" id="IPR004101">
    <property type="entry name" value="Mur_ligase_C"/>
</dbReference>
<dbReference type="InterPro" id="IPR036615">
    <property type="entry name" value="Mur_ligase_C_dom_sf"/>
</dbReference>
<dbReference type="InterPro" id="IPR013221">
    <property type="entry name" value="Mur_ligase_cen"/>
</dbReference>
<dbReference type="InterPro" id="IPR000713">
    <property type="entry name" value="Mur_ligase_N"/>
</dbReference>
<dbReference type="InterPro" id="IPR050061">
    <property type="entry name" value="MurCDEF_pg_biosynth"/>
</dbReference>
<dbReference type="InterPro" id="IPR005758">
    <property type="entry name" value="UDP-N-AcMur_Ala_ligase_MurC"/>
</dbReference>
<dbReference type="NCBIfam" id="TIGR01082">
    <property type="entry name" value="murC"/>
    <property type="match status" value="1"/>
</dbReference>
<dbReference type="PANTHER" id="PTHR43445:SF3">
    <property type="entry name" value="UDP-N-ACETYLMURAMATE--L-ALANINE LIGASE"/>
    <property type="match status" value="1"/>
</dbReference>
<dbReference type="PANTHER" id="PTHR43445">
    <property type="entry name" value="UDP-N-ACETYLMURAMATE--L-ALANINE LIGASE-RELATED"/>
    <property type="match status" value="1"/>
</dbReference>
<dbReference type="Pfam" id="PF01225">
    <property type="entry name" value="Mur_ligase"/>
    <property type="match status" value="1"/>
</dbReference>
<dbReference type="Pfam" id="PF02875">
    <property type="entry name" value="Mur_ligase_C"/>
    <property type="match status" value="1"/>
</dbReference>
<dbReference type="Pfam" id="PF08245">
    <property type="entry name" value="Mur_ligase_M"/>
    <property type="match status" value="1"/>
</dbReference>
<dbReference type="SUPFAM" id="SSF51984">
    <property type="entry name" value="MurCD N-terminal domain"/>
    <property type="match status" value="1"/>
</dbReference>
<dbReference type="SUPFAM" id="SSF53623">
    <property type="entry name" value="MurD-like peptide ligases, catalytic domain"/>
    <property type="match status" value="1"/>
</dbReference>
<dbReference type="SUPFAM" id="SSF53244">
    <property type="entry name" value="MurD-like peptide ligases, peptide-binding domain"/>
    <property type="match status" value="1"/>
</dbReference>
<reference key="1">
    <citation type="journal article" date="2007" name="Nat. Biotechnol.">
        <title>Genome sequence and identification of candidate vaccine antigens from the animal pathogen Dichelobacter nodosus.</title>
        <authorList>
            <person name="Myers G.S.A."/>
            <person name="Parker D."/>
            <person name="Al-Hasani K."/>
            <person name="Kennan R.M."/>
            <person name="Seemann T."/>
            <person name="Ren Q."/>
            <person name="Badger J.H."/>
            <person name="Selengut J.D."/>
            <person name="Deboy R.T."/>
            <person name="Tettelin H."/>
            <person name="Boyce J.D."/>
            <person name="McCarl V.P."/>
            <person name="Han X."/>
            <person name="Nelson W.C."/>
            <person name="Madupu R."/>
            <person name="Mohamoud Y."/>
            <person name="Holley T."/>
            <person name="Fedorova N."/>
            <person name="Khouri H."/>
            <person name="Bottomley S.P."/>
            <person name="Whittington R.J."/>
            <person name="Adler B."/>
            <person name="Songer J.G."/>
            <person name="Rood J.I."/>
            <person name="Paulsen I.T."/>
        </authorList>
    </citation>
    <scope>NUCLEOTIDE SEQUENCE [LARGE SCALE GENOMIC DNA]</scope>
    <source>
        <strain>VCS1703A</strain>
    </source>
</reference>
<protein>
    <recommendedName>
        <fullName evidence="1">UDP-N-acetylmuramate--L-alanine ligase</fullName>
        <ecNumber evidence="1">6.3.2.8</ecNumber>
    </recommendedName>
    <alternativeName>
        <fullName evidence="1">UDP-N-acetylmuramoyl-L-alanine synthetase</fullName>
    </alternativeName>
</protein>
<organism>
    <name type="scientific">Dichelobacter nodosus (strain VCS1703A)</name>
    <dbReference type="NCBI Taxonomy" id="246195"/>
    <lineage>
        <taxon>Bacteria</taxon>
        <taxon>Pseudomonadati</taxon>
        <taxon>Pseudomonadota</taxon>
        <taxon>Gammaproteobacteria</taxon>
        <taxon>Cardiobacteriales</taxon>
        <taxon>Cardiobacteriaceae</taxon>
        <taxon>Dichelobacter</taxon>
    </lineage>
</organism>
<name>MURC_DICNV</name>
<feature type="chain" id="PRO_0000336831" description="UDP-N-acetylmuramate--L-alanine ligase">
    <location>
        <begin position="1"/>
        <end position="478"/>
    </location>
</feature>
<feature type="binding site" evidence="1">
    <location>
        <begin position="125"/>
        <end position="131"/>
    </location>
    <ligand>
        <name>ATP</name>
        <dbReference type="ChEBI" id="CHEBI:30616"/>
    </ligand>
</feature>
<evidence type="ECO:0000255" key="1">
    <source>
        <dbReference type="HAMAP-Rule" id="MF_00046"/>
    </source>
</evidence>
<accession>A5EY22</accession>
<gene>
    <name evidence="1" type="primary">murC</name>
    <name type="ordered locus">DNO_0980</name>
</gene>
<sequence length="478" mass="52470">MNHEVHFGRIERRHMRRVKNIFFVGIGGTGMSGIAEVLLNLGYSISGSDIKDSAVTQYLAQKGAQIFIGHAAENVEHADVVVVSSAIAENNVEVKQARALEIPVIRRAQMLAELMRFRFGIAIAGTHGKTTTTSLTASLLSDAGLDPTFVIGGILTAAGSNARLGEGHYLVAESDESDCSFWLLQPMISIVTNIDADHLENYNGSYETLKAGFVRFLHNLPFYGLAVLCIDDAGVRSILPEVGRPVRTYGFSEDADVRAINVRQKGLAMHFDVIAHDEDRCFSVTLNMAGKHNVLNALAAIIVGEELGIDRETIIEGLAQFKGVARRFTHHGRIAHDHGFADVFEDYGHHPREIKAVLDAAMEGFAGRRIVAVFQPHRFTRTRDLLDDFAEVLAVCDCLVLTEVYAAGEEPIAGADARDLTRAIRAHGRVEPIFIADKEEIVPHLRHDILQDDDVVIFFGAGDIGRVAKMMDELKIKE</sequence>